<accession>A3MA70</accession>
<gene>
    <name evidence="1" type="primary">purC</name>
    <name type="ordered locus">A1S_3425</name>
</gene>
<comment type="catalytic activity">
    <reaction evidence="1">
        <text>5-amino-1-(5-phospho-D-ribosyl)imidazole-4-carboxylate + L-aspartate + ATP = (2S)-2-[5-amino-1-(5-phospho-beta-D-ribosyl)imidazole-4-carboxamido]succinate + ADP + phosphate + 2 H(+)</text>
        <dbReference type="Rhea" id="RHEA:22628"/>
        <dbReference type="ChEBI" id="CHEBI:15378"/>
        <dbReference type="ChEBI" id="CHEBI:29991"/>
        <dbReference type="ChEBI" id="CHEBI:30616"/>
        <dbReference type="ChEBI" id="CHEBI:43474"/>
        <dbReference type="ChEBI" id="CHEBI:58443"/>
        <dbReference type="ChEBI" id="CHEBI:77657"/>
        <dbReference type="ChEBI" id="CHEBI:456216"/>
        <dbReference type="EC" id="6.3.2.6"/>
    </reaction>
</comment>
<comment type="pathway">
    <text evidence="1">Purine metabolism; IMP biosynthesis via de novo pathway; 5-amino-1-(5-phospho-D-ribosyl)imidazole-4-carboxamide from 5-amino-1-(5-phospho-D-ribosyl)imidazole-4-carboxylate: step 1/2.</text>
</comment>
<comment type="similarity">
    <text evidence="1">Belongs to the SAICAR synthetase family.</text>
</comment>
<proteinExistence type="inferred from homology"/>
<reference key="1">
    <citation type="journal article" date="2007" name="Genes Dev.">
        <title>New insights into Acinetobacter baumannii pathogenesis revealed by high-density pyrosequencing and transposon mutagenesis.</title>
        <authorList>
            <person name="Smith M.G."/>
            <person name="Gianoulis T.A."/>
            <person name="Pukatzki S."/>
            <person name="Mekalanos J.J."/>
            <person name="Ornston L.N."/>
            <person name="Gerstein M."/>
            <person name="Snyder M."/>
        </authorList>
    </citation>
    <scope>NUCLEOTIDE SEQUENCE [LARGE SCALE GENOMIC DNA]</scope>
    <source>
        <strain>ATCC 17978 / DSM 105126 / CIP 53.77 / LMG 1025 / NCDC KC755 / 5377</strain>
    </source>
</reference>
<name>PUR7_ACIBT</name>
<evidence type="ECO:0000255" key="1">
    <source>
        <dbReference type="HAMAP-Rule" id="MF_00137"/>
    </source>
</evidence>
<feature type="chain" id="PRO_1000095959" description="Phosphoribosylaminoimidazole-succinocarboxamide synthase">
    <location>
        <begin position="1"/>
        <end position="239"/>
    </location>
</feature>
<keyword id="KW-0067">ATP-binding</keyword>
<keyword id="KW-0436">Ligase</keyword>
<keyword id="KW-0547">Nucleotide-binding</keyword>
<keyword id="KW-0658">Purine biosynthesis</keyword>
<dbReference type="EC" id="6.3.2.6" evidence="1"/>
<dbReference type="EMBL" id="CP000521">
    <property type="protein sequence ID" value="ABO13814.2"/>
    <property type="molecule type" value="Genomic_DNA"/>
</dbReference>
<dbReference type="RefSeq" id="WP_000917863.1">
    <property type="nucleotide sequence ID" value="NZ_CP053098.1"/>
</dbReference>
<dbReference type="SMR" id="A3MA70"/>
<dbReference type="GeneID" id="92895662"/>
<dbReference type="KEGG" id="acb:A1S_3425"/>
<dbReference type="HOGENOM" id="CLU_061495_2_0_6"/>
<dbReference type="UniPathway" id="UPA00074">
    <property type="reaction ID" value="UER00131"/>
</dbReference>
<dbReference type="GO" id="GO:0005829">
    <property type="term" value="C:cytosol"/>
    <property type="evidence" value="ECO:0007669"/>
    <property type="project" value="TreeGrafter"/>
</dbReference>
<dbReference type="GO" id="GO:0005524">
    <property type="term" value="F:ATP binding"/>
    <property type="evidence" value="ECO:0007669"/>
    <property type="project" value="UniProtKB-KW"/>
</dbReference>
<dbReference type="GO" id="GO:0004639">
    <property type="term" value="F:phosphoribosylaminoimidazolesuccinocarboxamide synthase activity"/>
    <property type="evidence" value="ECO:0007669"/>
    <property type="project" value="UniProtKB-UniRule"/>
</dbReference>
<dbReference type="GO" id="GO:0006189">
    <property type="term" value="P:'de novo' IMP biosynthetic process"/>
    <property type="evidence" value="ECO:0007669"/>
    <property type="project" value="UniProtKB-UniRule"/>
</dbReference>
<dbReference type="GO" id="GO:0009236">
    <property type="term" value="P:cobalamin biosynthetic process"/>
    <property type="evidence" value="ECO:0007669"/>
    <property type="project" value="InterPro"/>
</dbReference>
<dbReference type="CDD" id="cd01415">
    <property type="entry name" value="SAICAR_synt_PurC"/>
    <property type="match status" value="1"/>
</dbReference>
<dbReference type="FunFam" id="3.30.200.20:FF:000086">
    <property type="entry name" value="Phosphoribosylaminoimidazole-succinocarboxamide synthase"/>
    <property type="match status" value="1"/>
</dbReference>
<dbReference type="FunFam" id="3.30.470.20:FF:000006">
    <property type="entry name" value="Phosphoribosylaminoimidazole-succinocarboxamide synthase"/>
    <property type="match status" value="1"/>
</dbReference>
<dbReference type="Gene3D" id="3.30.470.20">
    <property type="entry name" value="ATP-grasp fold, B domain"/>
    <property type="match status" value="1"/>
</dbReference>
<dbReference type="Gene3D" id="3.30.200.20">
    <property type="entry name" value="Phosphorylase Kinase, domain 1"/>
    <property type="match status" value="1"/>
</dbReference>
<dbReference type="HAMAP" id="MF_00137">
    <property type="entry name" value="SAICAR_synth"/>
    <property type="match status" value="1"/>
</dbReference>
<dbReference type="InterPro" id="IPR028923">
    <property type="entry name" value="SAICAR_synt/ADE2_N"/>
</dbReference>
<dbReference type="InterPro" id="IPR033934">
    <property type="entry name" value="SAICAR_synt_PurC"/>
</dbReference>
<dbReference type="InterPro" id="IPR001636">
    <property type="entry name" value="SAICAR_synth"/>
</dbReference>
<dbReference type="InterPro" id="IPR050089">
    <property type="entry name" value="SAICAR_synthetase"/>
</dbReference>
<dbReference type="InterPro" id="IPR018236">
    <property type="entry name" value="SAICAR_synthetase_CS"/>
</dbReference>
<dbReference type="NCBIfam" id="TIGR00081">
    <property type="entry name" value="purC"/>
    <property type="match status" value="1"/>
</dbReference>
<dbReference type="PANTHER" id="PTHR43599">
    <property type="entry name" value="MULTIFUNCTIONAL PROTEIN ADE2"/>
    <property type="match status" value="1"/>
</dbReference>
<dbReference type="PANTHER" id="PTHR43599:SF3">
    <property type="entry name" value="SI:DKEY-6E2.2"/>
    <property type="match status" value="1"/>
</dbReference>
<dbReference type="Pfam" id="PF01259">
    <property type="entry name" value="SAICAR_synt"/>
    <property type="match status" value="1"/>
</dbReference>
<dbReference type="SUPFAM" id="SSF56104">
    <property type="entry name" value="SAICAR synthase-like"/>
    <property type="match status" value="1"/>
</dbReference>
<dbReference type="PROSITE" id="PS01057">
    <property type="entry name" value="SAICAR_SYNTHETASE_1"/>
    <property type="match status" value="1"/>
</dbReference>
<dbReference type="PROSITE" id="PS01058">
    <property type="entry name" value="SAICAR_SYNTHETASE_2"/>
    <property type="match status" value="1"/>
</dbReference>
<sequence>MLKQTLLYTGKAKSVYETDNADHLILVFRDDASAFNGEKIEQLDRKGKVNNRFNAFIMEKLAEAGIETHFEKLLSPTEVLVKKLQMIPVECVIRNYAAGSLCRRLGVEEGKELTPPTFELFYKDDGLGDPMVNESQAIALGWATAEQLEQMKVLTYKVNDVLKALFAEGNMILVDFKLEFGVFHDRIVLGDEFSPDGCRLWDKDTKKKLDKDRFRQGLGGVVEAYEEVAARLGVDLSDI</sequence>
<protein>
    <recommendedName>
        <fullName evidence="1">Phosphoribosylaminoimidazole-succinocarboxamide synthase</fullName>
        <ecNumber evidence="1">6.3.2.6</ecNumber>
    </recommendedName>
    <alternativeName>
        <fullName evidence="1">SAICAR synthetase</fullName>
    </alternativeName>
</protein>
<organism>
    <name type="scientific">Acinetobacter baumannii (strain ATCC 17978 / DSM 105126 / CIP 53.77 / LMG 1025 / NCDC KC755 / 5377)</name>
    <dbReference type="NCBI Taxonomy" id="400667"/>
    <lineage>
        <taxon>Bacteria</taxon>
        <taxon>Pseudomonadati</taxon>
        <taxon>Pseudomonadota</taxon>
        <taxon>Gammaproteobacteria</taxon>
        <taxon>Moraxellales</taxon>
        <taxon>Moraxellaceae</taxon>
        <taxon>Acinetobacter</taxon>
        <taxon>Acinetobacter calcoaceticus/baumannii complex</taxon>
    </lineage>
</organism>